<reference key="1">
    <citation type="journal article" date="2007" name="J. Bacteriol.">
        <title>Genome of the opportunistic pathogen Streptococcus sanguinis.</title>
        <authorList>
            <person name="Xu P."/>
            <person name="Alves J.M."/>
            <person name="Kitten T."/>
            <person name="Brown A."/>
            <person name="Chen Z."/>
            <person name="Ozaki L.S."/>
            <person name="Manque P."/>
            <person name="Ge X."/>
            <person name="Serrano M.G."/>
            <person name="Puiu D."/>
            <person name="Hendricks S."/>
            <person name="Wang Y."/>
            <person name="Chaplin M.D."/>
            <person name="Akan D."/>
            <person name="Paik S."/>
            <person name="Peterson D.L."/>
            <person name="Macrina F.L."/>
            <person name="Buck G.A."/>
        </authorList>
    </citation>
    <scope>NUCLEOTIDE SEQUENCE [LARGE SCALE GENOMIC DNA]</scope>
    <source>
        <strain>SK36</strain>
    </source>
</reference>
<dbReference type="EC" id="3.4.14.11" evidence="1"/>
<dbReference type="EMBL" id="CP000387">
    <property type="protein sequence ID" value="ABN43785.1"/>
    <property type="molecule type" value="Genomic_DNA"/>
</dbReference>
<dbReference type="RefSeq" id="WP_011836436.1">
    <property type="nucleotide sequence ID" value="NC_009009.1"/>
</dbReference>
<dbReference type="RefSeq" id="YP_001034335.1">
    <property type="nucleotide sequence ID" value="NC_009009.1"/>
</dbReference>
<dbReference type="SMR" id="A3CKT0"/>
<dbReference type="STRING" id="388919.SSA_0328"/>
<dbReference type="ESTHER" id="strsv-pepx">
    <property type="family name" value="Lactobacillus_peptidase"/>
</dbReference>
<dbReference type="MEROPS" id="S15.001"/>
<dbReference type="KEGG" id="ssa:SSA_0328"/>
<dbReference type="PATRIC" id="fig|388919.9.peg.318"/>
<dbReference type="eggNOG" id="COG2936">
    <property type="taxonomic scope" value="Bacteria"/>
</dbReference>
<dbReference type="HOGENOM" id="CLU_011800_0_0_9"/>
<dbReference type="OrthoDB" id="319764at2"/>
<dbReference type="Proteomes" id="UP000002148">
    <property type="component" value="Chromosome"/>
</dbReference>
<dbReference type="GO" id="GO:0005737">
    <property type="term" value="C:cytoplasm"/>
    <property type="evidence" value="ECO:0007669"/>
    <property type="project" value="UniProtKB-SubCell"/>
</dbReference>
<dbReference type="GO" id="GO:0004177">
    <property type="term" value="F:aminopeptidase activity"/>
    <property type="evidence" value="ECO:0007669"/>
    <property type="project" value="UniProtKB-KW"/>
</dbReference>
<dbReference type="GO" id="GO:0008239">
    <property type="term" value="F:dipeptidyl-peptidase activity"/>
    <property type="evidence" value="ECO:0007669"/>
    <property type="project" value="UniProtKB-UniRule"/>
</dbReference>
<dbReference type="GO" id="GO:0008236">
    <property type="term" value="F:serine-type peptidase activity"/>
    <property type="evidence" value="ECO:0007669"/>
    <property type="project" value="UniProtKB-KW"/>
</dbReference>
<dbReference type="GO" id="GO:0006508">
    <property type="term" value="P:proteolysis"/>
    <property type="evidence" value="ECO:0007669"/>
    <property type="project" value="UniProtKB-KW"/>
</dbReference>
<dbReference type="Gene3D" id="1.10.246.70">
    <property type="match status" value="1"/>
</dbReference>
<dbReference type="Gene3D" id="3.40.50.1820">
    <property type="entry name" value="alpha/beta hydrolase"/>
    <property type="match status" value="1"/>
</dbReference>
<dbReference type="Gene3D" id="2.60.120.260">
    <property type="entry name" value="Galactose-binding domain-like"/>
    <property type="match status" value="1"/>
</dbReference>
<dbReference type="HAMAP" id="MF_00698">
    <property type="entry name" value="Aminopeptidase_S15"/>
    <property type="match status" value="1"/>
</dbReference>
<dbReference type="InterPro" id="IPR029058">
    <property type="entry name" value="AB_hydrolase_fold"/>
</dbReference>
<dbReference type="InterPro" id="IPR008979">
    <property type="entry name" value="Galactose-bd-like_sf"/>
</dbReference>
<dbReference type="InterPro" id="IPR008252">
    <property type="entry name" value="Pept_S15_Xpro"/>
</dbReference>
<dbReference type="InterPro" id="IPR015251">
    <property type="entry name" value="PepX_N_dom"/>
</dbReference>
<dbReference type="InterPro" id="IPR036313">
    <property type="entry name" value="PepX_N_dom_sf"/>
</dbReference>
<dbReference type="InterPro" id="IPR000383">
    <property type="entry name" value="Xaa-Pro-like_dom"/>
</dbReference>
<dbReference type="InterPro" id="IPR013736">
    <property type="entry name" value="Xaa-Pro_dipept_C"/>
</dbReference>
<dbReference type="InterPro" id="IPR050585">
    <property type="entry name" value="Xaa-Pro_dipeptidyl-ppase/CocE"/>
</dbReference>
<dbReference type="NCBIfam" id="NF003783">
    <property type="entry name" value="PRK05371.1-4"/>
    <property type="match status" value="1"/>
</dbReference>
<dbReference type="PANTHER" id="PTHR43056:SF10">
    <property type="entry name" value="COCE_NOND FAMILY, PUTATIVE (AFU_ORTHOLOGUE AFUA_7G00600)-RELATED"/>
    <property type="match status" value="1"/>
</dbReference>
<dbReference type="PANTHER" id="PTHR43056">
    <property type="entry name" value="PEPTIDASE S9 PROLYL OLIGOPEPTIDASE"/>
    <property type="match status" value="1"/>
</dbReference>
<dbReference type="Pfam" id="PF02129">
    <property type="entry name" value="Peptidase_S15"/>
    <property type="match status" value="1"/>
</dbReference>
<dbReference type="Pfam" id="PF08530">
    <property type="entry name" value="PepX_C"/>
    <property type="match status" value="1"/>
</dbReference>
<dbReference type="Pfam" id="PF09168">
    <property type="entry name" value="PepX_N"/>
    <property type="match status" value="1"/>
</dbReference>
<dbReference type="PRINTS" id="PR00923">
    <property type="entry name" value="LACTOPTASE"/>
</dbReference>
<dbReference type="SMART" id="SM00939">
    <property type="entry name" value="PepX_C"/>
    <property type="match status" value="1"/>
</dbReference>
<dbReference type="SMART" id="SM00940">
    <property type="entry name" value="PepX_N"/>
    <property type="match status" value="1"/>
</dbReference>
<dbReference type="SUPFAM" id="SSF53474">
    <property type="entry name" value="alpha/beta-Hydrolases"/>
    <property type="match status" value="1"/>
</dbReference>
<dbReference type="SUPFAM" id="SSF49785">
    <property type="entry name" value="Galactose-binding domain-like"/>
    <property type="match status" value="1"/>
</dbReference>
<dbReference type="SUPFAM" id="SSF81761">
    <property type="entry name" value="X-Prolyl dipeptidyl aminopeptidase PepX, N-terminal domain"/>
    <property type="match status" value="1"/>
</dbReference>
<sequence length="762" mass="87582">MRFNQYSYAKTKRENMLIELAELGFFYDSNRSDKENLEDFLRTSFFTYKNTDYPLKSWAADSQTDLLSFFQSDRELTASVFYTVAFQLLEFSPFIDFTDVEAFRQETDFPITFGDLLENLYQLLNTRTKNGNLLIDKLVSEGLIPEDNTHHCFNGKSLATFSSHDAIREVVYVESRVDTDQDGRPDLIKVSIIRPRYQGPVPAVMTASPYHQGTNDPASDKALHDMNVDLAKKEPHQITVQDPELKLLQLDSPVPAQEVSETEEKLGHIGTYTLNDYLLPRGFANLYVSGVGTKDSEGLMTSGDYQQIEAYKNVIDWLNGRCRAFTDHTRQREIKATWSNGKVATTGISYLGTMSNGLATTGVDGLEVIIAEAGISSWYNYYRENGLVTSPGGYPGEDFESLTELTYSRNLRAGDYLRNNDAYQQNLEQQRKDLDRQTGDYNQFWHDRNYLLHADKVKAEVVFTHGSQDWNVKPLHVYNMFRALPPHIKKHLFFHNGAHVYMNNWQSIDFRESINALLSKKLLGCESDFVLPAVIWQDNSQAQSWLTLEDFGGQEQNLHLQLGQDCQSIQNQYSEEDYNRFAKNYQSFKTELFDGKVNQITLDWTLEKDLFLNGATQLNLRLKSSTDKGLISAQLLDFGLAKRHTPIPTPIEPRVMDNGRYYMLDNLVELPFAETPHRVITKGFLNLQNRTNLLSVEEVTPDQWLEFSFELQPTIYKMKKGDQLRLVLYTTDFEHTVRDKIDYQLTVDLEQSSLDLPTMTSH</sequence>
<name>PEPX_STRSV</name>
<comment type="function">
    <text evidence="1">Removes N-terminal dipeptides sequentially from polypeptides having unsubstituted N-termini provided that the penultimate residue is proline.</text>
</comment>
<comment type="catalytic activity">
    <reaction evidence="1">
        <text>Hydrolyzes Xaa-Pro-|- bonds to release unblocked, N-terminal dipeptides from substrates including Ala-Pro-|-p-nitroanilide and (sequentially) Tyr-Pro-|-Phe-Pro-|-Gly-Pro-|-Ile.</text>
        <dbReference type="EC" id="3.4.14.11"/>
    </reaction>
</comment>
<comment type="subunit">
    <text evidence="1">Homodimer.</text>
</comment>
<comment type="subcellular location">
    <subcellularLocation>
        <location evidence="1">Cytoplasm</location>
    </subcellularLocation>
</comment>
<comment type="similarity">
    <text evidence="1">Belongs to the peptidase S15 family.</text>
</comment>
<keyword id="KW-0031">Aminopeptidase</keyword>
<keyword id="KW-0963">Cytoplasm</keyword>
<keyword id="KW-0378">Hydrolase</keyword>
<keyword id="KW-0645">Protease</keyword>
<keyword id="KW-1185">Reference proteome</keyword>
<keyword id="KW-0720">Serine protease</keyword>
<feature type="chain" id="PRO_1000045494" description="Xaa-Pro dipeptidyl-peptidase">
    <location>
        <begin position="1"/>
        <end position="762"/>
    </location>
</feature>
<feature type="active site" description="Charge relay system" evidence="1">
    <location>
        <position position="349"/>
    </location>
</feature>
<feature type="active site" description="Charge relay system" evidence="1">
    <location>
        <position position="469"/>
    </location>
</feature>
<feature type="active site" description="Charge relay system" evidence="1">
    <location>
        <position position="499"/>
    </location>
</feature>
<gene>
    <name evidence="1" type="primary">pepX</name>
    <name type="ordered locus">SSA_0328</name>
</gene>
<proteinExistence type="inferred from homology"/>
<evidence type="ECO:0000255" key="1">
    <source>
        <dbReference type="HAMAP-Rule" id="MF_00698"/>
    </source>
</evidence>
<protein>
    <recommendedName>
        <fullName evidence="1">Xaa-Pro dipeptidyl-peptidase</fullName>
        <ecNumber evidence="1">3.4.14.11</ecNumber>
    </recommendedName>
    <alternativeName>
        <fullName evidence="1">X-Pro dipeptidyl-peptidase</fullName>
    </alternativeName>
    <alternativeName>
        <fullName evidence="1">X-prolyl-dipeptidyl aminopeptidase</fullName>
        <shortName evidence="1">X-PDAP</shortName>
    </alternativeName>
</protein>
<accession>A3CKT0</accession>
<organism>
    <name type="scientific">Streptococcus sanguinis (strain SK36)</name>
    <dbReference type="NCBI Taxonomy" id="388919"/>
    <lineage>
        <taxon>Bacteria</taxon>
        <taxon>Bacillati</taxon>
        <taxon>Bacillota</taxon>
        <taxon>Bacilli</taxon>
        <taxon>Lactobacillales</taxon>
        <taxon>Streptococcaceae</taxon>
        <taxon>Streptococcus</taxon>
    </lineage>
</organism>